<dbReference type="EC" id="6.3.2.45" evidence="1"/>
<dbReference type="EMBL" id="L42023">
    <property type="protein sequence ID" value="AAC21795.1"/>
    <property type="molecule type" value="Genomic_DNA"/>
</dbReference>
<dbReference type="PIR" id="B64002">
    <property type="entry name" value="B64002"/>
</dbReference>
<dbReference type="RefSeq" id="NP_438293.1">
    <property type="nucleotide sequence ID" value="NC_000907.1"/>
</dbReference>
<dbReference type="SMR" id="P43948"/>
<dbReference type="STRING" id="71421.HI_0121"/>
<dbReference type="DNASU" id="951026"/>
<dbReference type="EnsemblBacteria" id="AAC21795">
    <property type="protein sequence ID" value="AAC21795"/>
    <property type="gene ID" value="HI_0121"/>
</dbReference>
<dbReference type="KEGG" id="hin:HI_0121"/>
<dbReference type="PATRIC" id="fig|71421.8.peg.125"/>
<dbReference type="eggNOG" id="COG0773">
    <property type="taxonomic scope" value="Bacteria"/>
</dbReference>
<dbReference type="HOGENOM" id="CLU_028104_0_1_6"/>
<dbReference type="OrthoDB" id="9804126at2"/>
<dbReference type="PhylomeDB" id="P43948"/>
<dbReference type="BioCyc" id="HINF71421:G1GJ1-131-MONOMER"/>
<dbReference type="UniPathway" id="UPA00544"/>
<dbReference type="Proteomes" id="UP000000579">
    <property type="component" value="Chromosome"/>
</dbReference>
<dbReference type="GO" id="GO:0005524">
    <property type="term" value="F:ATP binding"/>
    <property type="evidence" value="ECO:0007669"/>
    <property type="project" value="UniProtKB-UniRule"/>
</dbReference>
<dbReference type="GO" id="GO:0106418">
    <property type="term" value="F:UDP-N-acetylmuramate-L-alanyl-gamma-D-glutamyl-meso-2,6-diaminoheptanedioate ligase activity"/>
    <property type="evidence" value="ECO:0007669"/>
    <property type="project" value="UniProtKB-EC"/>
</dbReference>
<dbReference type="GO" id="GO:0051301">
    <property type="term" value="P:cell division"/>
    <property type="evidence" value="ECO:0007669"/>
    <property type="project" value="UniProtKB-KW"/>
</dbReference>
<dbReference type="GO" id="GO:0071555">
    <property type="term" value="P:cell wall organization"/>
    <property type="evidence" value="ECO:0007669"/>
    <property type="project" value="UniProtKB-KW"/>
</dbReference>
<dbReference type="GO" id="GO:0009252">
    <property type="term" value="P:peptidoglycan biosynthetic process"/>
    <property type="evidence" value="ECO:0007669"/>
    <property type="project" value="UniProtKB-KW"/>
</dbReference>
<dbReference type="GO" id="GO:0009254">
    <property type="term" value="P:peptidoglycan turnover"/>
    <property type="evidence" value="ECO:0007669"/>
    <property type="project" value="UniProtKB-UniRule"/>
</dbReference>
<dbReference type="GO" id="GO:0008360">
    <property type="term" value="P:regulation of cell shape"/>
    <property type="evidence" value="ECO:0007669"/>
    <property type="project" value="UniProtKB-KW"/>
</dbReference>
<dbReference type="Gene3D" id="3.90.190.20">
    <property type="entry name" value="Mur ligase, C-terminal domain"/>
    <property type="match status" value="1"/>
</dbReference>
<dbReference type="Gene3D" id="3.40.1190.10">
    <property type="entry name" value="Mur-like, catalytic domain"/>
    <property type="match status" value="1"/>
</dbReference>
<dbReference type="Gene3D" id="3.40.50.720">
    <property type="entry name" value="NAD(P)-binding Rossmann-like Domain"/>
    <property type="match status" value="1"/>
</dbReference>
<dbReference type="HAMAP" id="MF_02020">
    <property type="entry name" value="Mpl"/>
    <property type="match status" value="1"/>
</dbReference>
<dbReference type="InterPro" id="IPR005757">
    <property type="entry name" value="Mpl"/>
</dbReference>
<dbReference type="InterPro" id="IPR036565">
    <property type="entry name" value="Mur-like_cat_sf"/>
</dbReference>
<dbReference type="InterPro" id="IPR004101">
    <property type="entry name" value="Mur_ligase_C"/>
</dbReference>
<dbReference type="InterPro" id="IPR036615">
    <property type="entry name" value="Mur_ligase_C_dom_sf"/>
</dbReference>
<dbReference type="InterPro" id="IPR013221">
    <property type="entry name" value="Mur_ligase_cen"/>
</dbReference>
<dbReference type="InterPro" id="IPR000713">
    <property type="entry name" value="Mur_ligase_N"/>
</dbReference>
<dbReference type="InterPro" id="IPR050061">
    <property type="entry name" value="MurCDEF_pg_biosynth"/>
</dbReference>
<dbReference type="NCBIfam" id="TIGR01081">
    <property type="entry name" value="mpl"/>
    <property type="match status" value="1"/>
</dbReference>
<dbReference type="PANTHER" id="PTHR43445">
    <property type="entry name" value="UDP-N-ACETYLMURAMATE--L-ALANINE LIGASE-RELATED"/>
    <property type="match status" value="1"/>
</dbReference>
<dbReference type="PANTHER" id="PTHR43445:SF5">
    <property type="entry name" value="UDP-N-ACETYLMURAMATE--L-ALANYL-GAMMA-D-GLUTAMYL-MESO-2,6-DIAMINOHEPTANDIOATE LIGASE"/>
    <property type="match status" value="1"/>
</dbReference>
<dbReference type="Pfam" id="PF01225">
    <property type="entry name" value="Mur_ligase"/>
    <property type="match status" value="1"/>
</dbReference>
<dbReference type="Pfam" id="PF02875">
    <property type="entry name" value="Mur_ligase_C"/>
    <property type="match status" value="1"/>
</dbReference>
<dbReference type="Pfam" id="PF08245">
    <property type="entry name" value="Mur_ligase_M"/>
    <property type="match status" value="1"/>
</dbReference>
<dbReference type="SUPFAM" id="SSF51984">
    <property type="entry name" value="MurCD N-terminal domain"/>
    <property type="match status" value="1"/>
</dbReference>
<dbReference type="SUPFAM" id="SSF53623">
    <property type="entry name" value="MurD-like peptide ligases, catalytic domain"/>
    <property type="match status" value="1"/>
</dbReference>
<dbReference type="SUPFAM" id="SSF53244">
    <property type="entry name" value="MurD-like peptide ligases, peptide-binding domain"/>
    <property type="match status" value="1"/>
</dbReference>
<reference key="1">
    <citation type="journal article" date="1995" name="Science">
        <title>Whole-genome random sequencing and assembly of Haemophilus influenzae Rd.</title>
        <authorList>
            <person name="Fleischmann R.D."/>
            <person name="Adams M.D."/>
            <person name="White O."/>
            <person name="Clayton R.A."/>
            <person name="Kirkness E.F."/>
            <person name="Kerlavage A.R."/>
            <person name="Bult C.J."/>
            <person name="Tomb J.-F."/>
            <person name="Dougherty B.A."/>
            <person name="Merrick J.M."/>
            <person name="McKenney K."/>
            <person name="Sutton G.G."/>
            <person name="FitzHugh W."/>
            <person name="Fields C.A."/>
            <person name="Gocayne J.D."/>
            <person name="Scott J.D."/>
            <person name="Shirley R."/>
            <person name="Liu L.-I."/>
            <person name="Glodek A."/>
            <person name="Kelley J.M."/>
            <person name="Weidman J.F."/>
            <person name="Phillips C.A."/>
            <person name="Spriggs T."/>
            <person name="Hedblom E."/>
            <person name="Cotton M.D."/>
            <person name="Utterback T.R."/>
            <person name="Hanna M.C."/>
            <person name="Nguyen D.T."/>
            <person name="Saudek D.M."/>
            <person name="Brandon R.C."/>
            <person name="Fine L.D."/>
            <person name="Fritchman J.L."/>
            <person name="Fuhrmann J.L."/>
            <person name="Geoghagen N.S.M."/>
            <person name="Gnehm C.L."/>
            <person name="McDonald L.A."/>
            <person name="Small K.V."/>
            <person name="Fraser C.M."/>
            <person name="Smith H.O."/>
            <person name="Venter J.C."/>
        </authorList>
    </citation>
    <scope>NUCLEOTIDE SEQUENCE [LARGE SCALE GENOMIC DNA]</scope>
    <source>
        <strain>ATCC 51907 / DSM 11121 / KW20 / Rd</strain>
    </source>
</reference>
<evidence type="ECO:0000255" key="1">
    <source>
        <dbReference type="HAMAP-Rule" id="MF_02020"/>
    </source>
</evidence>
<comment type="function">
    <text evidence="1">Reutilizes the intact tripeptide L-alanyl-gamma-D-glutamyl-meso-diaminopimelate by linking it to UDP-N-acetylmuramate.</text>
</comment>
<comment type="catalytic activity">
    <reaction evidence="1">
        <text>UDP-N-acetyl-alpha-D-muramate + L-alanyl-gamma-D-glutamyl-meso-2,6-diaminopimelate + ATP = UDP-N-acetyl-alpha-D-muramoyl-L-alanyl-gamma-D-glutamyl-meso-2,6-diaminopimelate + ADP + phosphate + H(+)</text>
        <dbReference type="Rhea" id="RHEA:29563"/>
        <dbReference type="ChEBI" id="CHEBI:15378"/>
        <dbReference type="ChEBI" id="CHEBI:30616"/>
        <dbReference type="ChEBI" id="CHEBI:43474"/>
        <dbReference type="ChEBI" id="CHEBI:61401"/>
        <dbReference type="ChEBI" id="CHEBI:70757"/>
        <dbReference type="ChEBI" id="CHEBI:83905"/>
        <dbReference type="ChEBI" id="CHEBI:456216"/>
        <dbReference type="EC" id="6.3.2.45"/>
    </reaction>
</comment>
<comment type="cofactor">
    <cofactor evidence="1">
        <name>Mg(2+)</name>
        <dbReference type="ChEBI" id="CHEBI:18420"/>
    </cofactor>
</comment>
<comment type="pathway">
    <text evidence="1">Cell wall biogenesis; peptidoglycan recycling.</text>
</comment>
<comment type="similarity">
    <text evidence="1">Belongs to the MurCDEF family. Mpl subfamily.</text>
</comment>
<sequence length="453" mass="50074">MKHIHILGICGTFMGGVAMIAKQMGYHVTGSDTNVYPPMSTFLEEQGIEIIPNYDVAQLQPAPDMVIVGNAMKRGNPCVEYVLENNLKYTSGPQWLHDHLLRDRWVLAVSGTHGKTTTTGMLTWVLEQNGLKSGFLIGGIAGNFGISARLGDSPYFIIEADEYDTAFFDKRSKFVHYNPRTLIVNNISFDHADIFDDLKAIQRQFHHMIRTIPASGLVLSSASEQSAKETLALGCWSQQQFLGKDNEWFAERITNDASHFAVFHHGEKVAEVKWNVVGQHNMHNALMAIAAAHHTGVAIEDACKALGSFVNAKRRLEVKGEVNSITVYDDFAHHPEAILATLTALRDKVGGGVRILAVLEPRSNTMKMGVHKDDIAPALGRADAVFMLQPEQLSWEVADIANQCVQPAYWNANLDRLVDMIVAKAQPTDHILVMSNGSFGGIHQKILDKLKLK</sequence>
<keyword id="KW-0067">ATP-binding</keyword>
<keyword id="KW-0131">Cell cycle</keyword>
<keyword id="KW-0132">Cell division</keyword>
<keyword id="KW-0133">Cell shape</keyword>
<keyword id="KW-0961">Cell wall biogenesis/degradation</keyword>
<keyword id="KW-0436">Ligase</keyword>
<keyword id="KW-0460">Magnesium</keyword>
<keyword id="KW-0547">Nucleotide-binding</keyword>
<keyword id="KW-0573">Peptidoglycan synthesis</keyword>
<keyword id="KW-1185">Reference proteome</keyword>
<organism>
    <name type="scientific">Haemophilus influenzae (strain ATCC 51907 / DSM 11121 / KW20 / Rd)</name>
    <dbReference type="NCBI Taxonomy" id="71421"/>
    <lineage>
        <taxon>Bacteria</taxon>
        <taxon>Pseudomonadati</taxon>
        <taxon>Pseudomonadota</taxon>
        <taxon>Gammaproteobacteria</taxon>
        <taxon>Pasteurellales</taxon>
        <taxon>Pasteurellaceae</taxon>
        <taxon>Haemophilus</taxon>
    </lineage>
</organism>
<feature type="chain" id="PRO_0000101709" description="UDP-N-acetylmuramate--L-alanyl-gamma-D-glutamyl-meso-2,6-diaminoheptandioate ligase">
    <location>
        <begin position="1"/>
        <end position="453"/>
    </location>
</feature>
<feature type="binding site" evidence="1">
    <location>
        <begin position="111"/>
        <end position="117"/>
    </location>
    <ligand>
        <name>ATP</name>
        <dbReference type="ChEBI" id="CHEBI:30616"/>
    </ligand>
</feature>
<gene>
    <name evidence="1" type="primary">mpl</name>
    <name type="ordered locus">HI_0121</name>
</gene>
<protein>
    <recommendedName>
        <fullName evidence="1">UDP-N-acetylmuramate--L-alanyl-gamma-D-glutamyl-meso-2,6-diaminoheptandioate ligase</fullName>
        <ecNumber evidence="1">6.3.2.45</ecNumber>
    </recommendedName>
    <alternativeName>
        <fullName evidence="1">Murein peptide ligase</fullName>
    </alternativeName>
    <alternativeName>
        <fullName evidence="1">UDP-N-acetylmuramate:L-alanyl-gamma-D-glutamyl-meso-diaminopimelate ligase</fullName>
    </alternativeName>
</protein>
<proteinExistence type="inferred from homology"/>
<name>MPL_HAEIN</name>
<accession>P43948</accession>